<keyword id="KW-0108">Calcium channel impairing toxin</keyword>
<keyword id="KW-1015">Disulfide bond</keyword>
<keyword id="KW-0872">Ion channel impairing toxin</keyword>
<keyword id="KW-0964">Secreted</keyword>
<keyword id="KW-0732">Signal</keyword>
<keyword id="KW-0800">Toxin</keyword>
<keyword id="KW-1218">Voltage-gated calcium channel impairing toxin</keyword>
<comment type="function">
    <text evidence="2">May interact and inhibit Cav3.1/CACNA1G calcium channels. In a ex vivo model, shows ability to block nerve signal transduction.</text>
</comment>
<comment type="subcellular location">
    <subcellularLocation>
        <location evidence="5">Secreted</location>
    </subcellularLocation>
</comment>
<comment type="tissue specificity">
    <text evidence="5">Expressed by the venom duct.</text>
</comment>
<comment type="domain">
    <text evidence="4">The cysteine framework is XIII (C-C-C-CC-C-C-C).</text>
</comment>
<comment type="PTM">
    <text evidence="4">Contains 4 disulfide bonds.</text>
</comment>
<name>CXDA_CONQU</name>
<sequence length="87" mass="9426">MNCLQLLLVLLLISTIAALHGDGRVPQRRGRNIRTMSNLLNFQTRDCPSSCPAVCPNQNECCDGDVCNYSNTLNKYFCIGCGSGGGE</sequence>
<feature type="signal peptide" evidence="1">
    <location>
        <begin position="1"/>
        <end position="18"/>
    </location>
</feature>
<feature type="propeptide" id="PRO_0000458109" evidence="5">
    <location>
        <begin position="19"/>
        <end position="34"/>
    </location>
</feature>
<feature type="chain" id="PRO_0000458110" description="Conotoxin QcMNCL-XIII0.1" evidence="5">
    <location>
        <begin position="35"/>
        <end position="87"/>
    </location>
</feature>
<proteinExistence type="inferred from homology"/>
<evidence type="ECO:0000255" key="1"/>
<evidence type="ECO:0000269" key="2">
    <source>
    </source>
</evidence>
<evidence type="ECO:0000303" key="3">
    <source>
    </source>
</evidence>
<evidence type="ECO:0000305" key="4"/>
<evidence type="ECO:0000305" key="5">
    <source ref="1"/>
</evidence>
<accession>P0DQZ1</accession>
<dbReference type="GO" id="GO:0005576">
    <property type="term" value="C:extracellular region"/>
    <property type="evidence" value="ECO:0007669"/>
    <property type="project" value="UniProtKB-SubCell"/>
</dbReference>
<dbReference type="GO" id="GO:0005246">
    <property type="term" value="F:calcium channel regulator activity"/>
    <property type="evidence" value="ECO:0007669"/>
    <property type="project" value="UniProtKB-KW"/>
</dbReference>
<dbReference type="GO" id="GO:0090729">
    <property type="term" value="F:toxin activity"/>
    <property type="evidence" value="ECO:0007669"/>
    <property type="project" value="UniProtKB-KW"/>
</dbReference>
<reference key="1">
    <citation type="journal article" date="2021" name="Front. Mar. Sci.">
        <title>Identification of novel conopeptides and distinct gene superfamilies in the marine cone snail Conus quercinus.</title>
        <authorList>
            <person name="Zhang H."/>
            <person name="Wang L."/>
            <person name="Yang X."/>
            <person name="Lian Z."/>
            <person name="Qiu Y."/>
            <person name="Dong Z."/>
            <person name="Wu X."/>
            <person name="Pan X."/>
        </authorList>
    </citation>
    <scope>NUCLEOTIDE SEQUENCE [MRNA]</scope>
</reference>
<reference key="2">
    <citation type="journal article" date="2022" name="Toxins">
        <title>Preparation and functional identification of a novel conotoxin QcMNCL-XIII0.1 from Conus quercinus.</title>
        <authorList>
            <person name="Zhang H."/>
            <person name="Liang A."/>
            <person name="Pan X."/>
        </authorList>
    </citation>
    <scope>FUNCTION</scope>
    <scope>RECOMBINANT EXPRESSION</scope>
</reference>
<organism>
    <name type="scientific">Conus quercinus</name>
    <name type="common">Oak cone</name>
    <dbReference type="NCBI Taxonomy" id="101313"/>
    <lineage>
        <taxon>Eukaryota</taxon>
        <taxon>Metazoa</taxon>
        <taxon>Spiralia</taxon>
        <taxon>Lophotrochozoa</taxon>
        <taxon>Mollusca</taxon>
        <taxon>Gastropoda</taxon>
        <taxon>Caenogastropoda</taxon>
        <taxon>Neogastropoda</taxon>
        <taxon>Conoidea</taxon>
        <taxon>Conidae</taxon>
        <taxon>Conus</taxon>
        <taxon>Lividoconus</taxon>
    </lineage>
</organism>
<protein>
    <recommendedName>
        <fullName evidence="3">Conotoxin QcMNCL-XIII0.1</fullName>
    </recommendedName>
</protein>